<proteinExistence type="evidence at protein level"/>
<comment type="function">
    <text evidence="2">Involved in vesicular trafficking at the Golgi apparatus level. May play a role in delivery of transport vesicles containing GPI-linked proteins from the trans-Golgi network through its interaction with MACF1. Involved in endosome-to-Golgi trafficking.</text>
</comment>
<comment type="subunit">
    <text evidence="2 8">Homodimer. Interacts with GTP-bound ARL1 and ARL3 (By similarity). Interacts with MACF1 (By similarity). Directly interacts with TBC1D23 (PubMed:29084197). Interacts with FAM91A1; this interaction may be mediated by TBC1D23 (By similarity).</text>
</comment>
<comment type="subcellular location">
    <subcellularLocation>
        <location evidence="6">Cytoplasm</location>
    </subcellularLocation>
    <subcellularLocation>
        <location evidence="6">Golgi apparatus membrane</location>
        <topology evidence="6">Peripheral membrane protein</topology>
    </subcellularLocation>
    <subcellularLocation>
        <location evidence="2">Golgi apparatus</location>
        <location evidence="2">trans-Golgi network membrane</location>
    </subcellularLocation>
</comment>
<comment type="tissue specificity">
    <text evidence="6">Ubiquitous. Highly expressed in oligodendrocyte precursors, particularly at a stage just prior to myelination.</text>
</comment>
<comment type="domain">
    <text>Extended rod-like protein with coiled-coil domains.</text>
</comment>
<comment type="sequence caution" evidence="9">
    <conflict type="erroneous initiation">
        <sequence resource="EMBL-CDS" id="AAH37641"/>
    </conflict>
    <text>Truncated N-terminus.</text>
</comment>
<organism>
    <name type="scientific">Mus musculus</name>
    <name type="common">Mouse</name>
    <dbReference type="NCBI Taxonomy" id="10090"/>
    <lineage>
        <taxon>Eukaryota</taxon>
        <taxon>Metazoa</taxon>
        <taxon>Chordata</taxon>
        <taxon>Craniata</taxon>
        <taxon>Vertebrata</taxon>
        <taxon>Euteleostomi</taxon>
        <taxon>Mammalia</taxon>
        <taxon>Eutheria</taxon>
        <taxon>Euarchontoglires</taxon>
        <taxon>Glires</taxon>
        <taxon>Rodentia</taxon>
        <taxon>Myomorpha</taxon>
        <taxon>Muroidea</taxon>
        <taxon>Muridae</taxon>
        <taxon>Murinae</taxon>
        <taxon>Mus</taxon>
        <taxon>Mus</taxon>
    </lineage>
</organism>
<reference key="1">
    <citation type="journal article" date="2002" name="DNA Cell Biol.">
        <title>Characterization of mouse tGolgin-1 (golgin-245/trans-Golgi p230/256 kD golgin) and its upregulation during oligodendrocyte development.</title>
        <authorList>
            <person name="Cowan D.A."/>
            <person name="Gay D."/>
            <person name="Bieler B.M."/>
            <person name="Zhao H."/>
            <person name="Yoshino A."/>
            <person name="Davis J.G."/>
            <person name="Tomayko M.M."/>
            <person name="Murali R."/>
            <person name="Greene M.I."/>
            <person name="Marks M.S."/>
        </authorList>
    </citation>
    <scope>NUCLEOTIDE SEQUENCE [MRNA]</scope>
    <scope>TISSUE SPECIFICITY</scope>
    <scope>SUBCELLULAR LOCATION</scope>
    <source>
        <strain>BALB/cJ</strain>
        <tissue>Brain</tissue>
    </source>
</reference>
<reference key="2">
    <citation type="journal article" date="2004" name="Genome Res.">
        <title>The status, quality, and expansion of the NIH full-length cDNA project: the Mammalian Gene Collection (MGC).</title>
        <authorList>
            <consortium name="The MGC Project Team"/>
        </authorList>
    </citation>
    <scope>NUCLEOTIDE SEQUENCE [LARGE SCALE MRNA] OF 1-980 AND 991-2231</scope>
    <scope>VARIANTS ARG-61; SER-280; GLU-293; SER-638; THR-819; THR-829 AND ALA-859</scope>
    <source>
        <strain>C57BL/6J</strain>
        <strain>Czech II</strain>
        <tissue>Brain</tissue>
        <tissue>Mammary tumor</tissue>
    </source>
</reference>
<reference key="3">
    <citation type="submission" date="2009-01" db="UniProtKB">
        <authorList>
            <person name="Lubec G."/>
            <person name="Sunyer B."/>
            <person name="Chen W.-Q."/>
        </authorList>
    </citation>
    <scope>PROTEIN SEQUENCE OF 1840-1856</scope>
    <scope>IDENTIFICATION BY MASS SPECTROMETRY</scope>
    <source>
        <strain>OF1</strain>
        <tissue>Hippocampus</tissue>
    </source>
</reference>
<reference key="4">
    <citation type="journal article" date="2007" name="Proc. Natl. Acad. Sci. U.S.A.">
        <title>Large-scale phosphorylation analysis of mouse liver.</title>
        <authorList>
            <person name="Villen J."/>
            <person name="Beausoleil S.A."/>
            <person name="Gerber S.A."/>
            <person name="Gygi S.P."/>
        </authorList>
    </citation>
    <scope>IDENTIFICATION BY MASS SPECTROMETRY [LARGE SCALE ANALYSIS]</scope>
    <source>
        <tissue>Liver</tissue>
    </source>
</reference>
<reference key="5">
    <citation type="journal article" date="2010" name="Cell">
        <title>A tissue-specific atlas of mouse protein phosphorylation and expression.</title>
        <authorList>
            <person name="Huttlin E.L."/>
            <person name="Jedrychowski M.P."/>
            <person name="Elias J.E."/>
            <person name="Goswami T."/>
            <person name="Rad R."/>
            <person name="Beausoleil S.A."/>
            <person name="Villen J."/>
            <person name="Haas W."/>
            <person name="Sowa M.E."/>
            <person name="Gygi S.P."/>
        </authorList>
    </citation>
    <scope>PHOSPHORYLATION [LARGE SCALE ANALYSIS] AT THR-39</scope>
    <scope>IDENTIFICATION BY MASS SPECTROMETRY [LARGE SCALE ANALYSIS]</scope>
    <source>
        <tissue>Brain</tissue>
        <tissue>Brown adipose tissue</tissue>
        <tissue>Heart</tissue>
        <tissue>Kidney</tissue>
        <tissue>Liver</tissue>
        <tissue>Lung</tissue>
        <tissue>Pancreas</tissue>
        <tissue>Spleen</tissue>
        <tissue>Testis</tissue>
    </source>
</reference>
<reference key="6">
    <citation type="journal article" date="2017" name="Nat. Cell Biol.">
        <title>TBC1D23 is a bridging factor for endosomal vesicle capture by golgins at the trans-Golgi.</title>
        <authorList>
            <person name="Shin J.J.H."/>
            <person name="Gillingham A.K."/>
            <person name="Begum F."/>
            <person name="Chadwick J."/>
            <person name="Munro S."/>
        </authorList>
    </citation>
    <scope>INTERACTION WITH TBC1D23</scope>
</reference>
<accession>Q91VW5</accession>
<accession>O70365</accession>
<accession>Q8CGH6</accession>
<feature type="chain" id="PRO_0000190060" description="Golgin subfamily A member 4">
    <location>
        <begin position="1"/>
        <end position="2238"/>
    </location>
</feature>
<feature type="domain" description="GRIP" evidence="4">
    <location>
        <begin position="2178"/>
        <end position="2225"/>
    </location>
</feature>
<feature type="region of interest" description="Disordered" evidence="5">
    <location>
        <begin position="1"/>
        <end position="90"/>
    </location>
</feature>
<feature type="region of interest" description="Disordered" evidence="5">
    <location>
        <begin position="132"/>
        <end position="154"/>
    </location>
</feature>
<feature type="region of interest" description="Interaction with MACF1" evidence="1">
    <location>
        <begin position="154"/>
        <end position="224"/>
    </location>
</feature>
<feature type="region of interest" description="Disordered" evidence="5">
    <location>
        <begin position="1695"/>
        <end position="1744"/>
    </location>
</feature>
<feature type="region of interest" description="Disordered" evidence="5">
    <location>
        <begin position="1770"/>
        <end position="1789"/>
    </location>
</feature>
<feature type="coiled-coil region" evidence="3">
    <location>
        <begin position="156"/>
        <end position="2161"/>
    </location>
</feature>
<feature type="compositionally biased region" description="Low complexity" evidence="5">
    <location>
        <begin position="12"/>
        <end position="41"/>
    </location>
</feature>
<feature type="compositionally biased region" description="Polar residues" evidence="5">
    <location>
        <begin position="52"/>
        <end position="62"/>
    </location>
</feature>
<feature type="compositionally biased region" description="Polar residues" evidence="5">
    <location>
        <begin position="73"/>
        <end position="85"/>
    </location>
</feature>
<feature type="compositionally biased region" description="Basic and acidic residues" evidence="5">
    <location>
        <begin position="1695"/>
        <end position="1711"/>
    </location>
</feature>
<feature type="modified residue" description="Phosphoserine" evidence="2">
    <location>
        <position position="10"/>
    </location>
</feature>
<feature type="modified residue" description="Phosphothreonine" evidence="10">
    <location>
        <position position="39"/>
    </location>
</feature>
<feature type="modified residue" description="Phosphoserine" evidence="2">
    <location>
        <position position="41"/>
    </location>
</feature>
<feature type="modified residue" description="Phosphoserine" evidence="2">
    <location>
        <position position="93"/>
    </location>
</feature>
<feature type="modified residue" description="Phosphoserine" evidence="2">
    <location>
        <position position="100"/>
    </location>
</feature>
<feature type="sequence variant" description="In strain: Czech II." evidence="7">
    <original>T</original>
    <variation>R</variation>
    <location>
        <position position="61"/>
    </location>
</feature>
<feature type="sequence variant" description="In strain: Czech II." evidence="7">
    <original>G</original>
    <variation>S</variation>
    <location>
        <position position="280"/>
    </location>
</feature>
<feature type="sequence variant" description="In strain: Czech II." evidence="7">
    <original>G</original>
    <variation>E</variation>
    <location>
        <position position="293"/>
    </location>
</feature>
<feature type="sequence variant" description="In strain: Czech II." evidence="7">
    <original>G</original>
    <variation>S</variation>
    <location>
        <position position="638"/>
    </location>
</feature>
<feature type="sequence variant" description="In strain: Czech II." evidence="7">
    <original>K</original>
    <variation>T</variation>
    <location>
        <position position="819"/>
    </location>
</feature>
<feature type="sequence variant" description="In strain: Czech II." evidence="7">
    <original>A</original>
    <variation>T</variation>
    <location>
        <position position="829"/>
    </location>
</feature>
<feature type="sequence variant" description="In strain: Czech II." evidence="7">
    <original>T</original>
    <variation>A</variation>
    <location>
        <position position="859"/>
    </location>
</feature>
<feature type="sequence variant" description="In strain: C57BL/6.">
    <original>R</original>
    <variation>S</variation>
    <location>
        <position position="2065"/>
    </location>
</feature>
<protein>
    <recommendedName>
        <fullName>Golgin subfamily A member 4</fullName>
    </recommendedName>
    <alternativeName>
        <fullName>tGolgin-1</fullName>
    </alternativeName>
</protein>
<sequence length="2238" mass="257564">MFKKLKQKISEEQQQLQQALAPAQASSSSSTPTRTRSRTSSFTDQLDDVTPNRENASTQATKSPDGVSKDESSPSQSGDTQTFAQKLQLRVPSMESLFRSPIKESLFRSSKEPLVRTSSRESLNQLDLDCSAAAFDPPSDMESEAEDAPWNSDGLSREQLLQRLRRMERSLSSYRGKYSELVTAFQTLQREKKKLQGILSQSQDKSLRRISELREELQMDQQAKKHLQDEFDACLEEKDQYISVLQTQVSLLKQRLQNGPMNVDAPKPLPPGELQAEVHGDTEKMEGVGEPVGGGTSAKTLEMLQQRVKRQENLLQRCKETIGSHKEQCALLLSEKEALQEQLDERLQELEKMKELHMAEKTKLITQLRDAKNLIEQLEQDKGMVITETKRQMLETLELKEDEIAQLRSHIKQMTTQGEELREQKEKSERAAFEELEKALSTAQKTEDAQRRMKMEMDEQMKAVERASEEERLRLQHELSRVRQEAASMAKKNSEEQVAALQKLHAEELASKEQELSRRLEARERELQEQMRIALEKSRSEYLKLTQEKEQQESLALEELELQKKAILTESENKLQELGQEAEAYRTRILELETSLEKSLQESKTQSEHLAVHLEAEKNKHNKELTALAEQHRTEVEGLQQQQDSLWTERLQSLSQQHQAAVEELREKYQQEKDALLKEKESLFQAHIQDMNEKTLEKLDKKQMELESVSSELSEALRARDQLAEELSVLRGDADKMKQALEAELEEQRRHHQREVGSISEQQELTVRRAEKALKDELSRLGALLDERDEHLRERQARVQDLEAHLQKSAGELQQALAKLDLLHSEQSAAREQAGAYEEQLAQMQQKVLDLETEKSLLTKQVVEMETHKKHVCEELDAQRAQVQQLERQRSELEEKVRSLAQLQDSQLKNSTVEKEQARQSLMEKENIILQMREEQAKEIEILKQTLSSKEESISILHEEYETKFKNQEKRMEKIKQKAKEMQETKKKLLDQEAKLKKELENTVLELSQKEKQFNAQILEMAQANSAGISDTVSRLEENQRQQIESLTGAHQRKLDDVIEAWEKKLSQQAAELRDKHAEQMEEKEQGLGELRQKVRIVQSEKEELTKEVARLKEAVSGQDVALAGLQGQLEQKSAVIVSLSERESQLQSQVEKLEADLGCSLSEKLSLQEELAELKLLADKSQLRVSELTGQVQAAEKELQSCKSLHELSKKSLEDKSLNLKSLLEELASQLDSRCERTKALLEAKTNELVCTSRDKADAILARLSQCQRHTATVGEALLRRMGQVSELEAQLTQLTEEQRTLKSSFQQVTNQLEEKEKQIKTMKADIEGLLTEKEALQQEGGQQRQAASEKESCITQLKKELAENINAVTLLREELSEKKSEIASLSKQLSDLGAQLESSISPSDKAEAISALSKQHEEQELQLQAQLQELSLKVDALSKEKMSALEQVDHWSNKFSEWKKKAQSRLAQHQSTIKDLQAQLDVKATDAREKEEQICLLKEDLDRQNKKFECLKGEMEVRKSKMEKKECDLETALKTQTARVVELEDCVTQRKKEVESLNETLKNYNQQRDTEHSGLVQRLQHLEELGEEKDNKVREAEETVLRLREHVSSLEAELGTVKKELEHVNSSVKSRDGELKALEDKLELESAAKVELKRKAEQKIAAIRKQLLSQMEEKTQRYAKDTENRLSELSAQLKEREKQVHSLEDKLKNLESSPHPEVPAVSRSMQSVAASPEQEAPDSQDCTHKACKERLCMLQRRLSEKEKLLRRLEQGEGEARPSQPEAQHRALSGKLDCTRARQLEDHVLIGCLPEELEEKMKCSLIVSQPMGEETGNNTGVKQNWASVVDSVQKTLQEKELTCQALEQRVKELESDLVRERGAHRLEVEKLTLKYEKSQSSQQEMDGENKCVEVLEDRPEENSQSHEIQSNVGTVDGLRSDLESKLTGAERDKQKLSKEVARLQKELRALRREHQQELDILKRECEQEAEEKLKQEQEDLELKHTSTLKQLMREFNTQLAQKEQELERTVQETIDKAQEVEAELLESHQEETQQLHRKIAEKEDDLRRTARRYEEILDAREEEMTGKVTDLQTQLEELQKKYQQRLEQEESTKDSVTILELQTQLAQKTTLISDSKLKEQELREQVHNLEDRLKRYEKNACAATVGTPYKGGNLYHTEVSLFGEPTEFEYLRKVMFEYMMGRETKTMAKVITTVLKFPDDQAQKILEREDARLMSWLRTSS</sequence>
<name>GOGA4_MOUSE</name>
<gene>
    <name type="primary">Golga4</name>
</gene>
<evidence type="ECO:0000250" key="1"/>
<evidence type="ECO:0000250" key="2">
    <source>
        <dbReference type="UniProtKB" id="Q13439"/>
    </source>
</evidence>
<evidence type="ECO:0000255" key="3"/>
<evidence type="ECO:0000255" key="4">
    <source>
        <dbReference type="PROSITE-ProRule" id="PRU00250"/>
    </source>
</evidence>
<evidence type="ECO:0000256" key="5">
    <source>
        <dbReference type="SAM" id="MobiDB-lite"/>
    </source>
</evidence>
<evidence type="ECO:0000269" key="6">
    <source>
    </source>
</evidence>
<evidence type="ECO:0000269" key="7">
    <source>
    </source>
</evidence>
<evidence type="ECO:0000269" key="8">
    <source>
    </source>
</evidence>
<evidence type="ECO:0000305" key="9"/>
<evidence type="ECO:0007744" key="10">
    <source>
    </source>
</evidence>
<dbReference type="EMBL" id="AF051357">
    <property type="protein sequence ID" value="AAC05573.2"/>
    <property type="molecule type" value="mRNA"/>
</dbReference>
<dbReference type="EMBL" id="BC007485">
    <property type="protein sequence ID" value="AAH07485.1"/>
    <property type="molecule type" value="mRNA"/>
</dbReference>
<dbReference type="EMBL" id="BC037641">
    <property type="protein sequence ID" value="AAH37641.1"/>
    <property type="status" value="ALT_INIT"/>
    <property type="molecule type" value="mRNA"/>
</dbReference>
<dbReference type="EMBL" id="BC053000">
    <property type="protein sequence ID" value="AAH53000.1"/>
    <property type="molecule type" value="mRNA"/>
</dbReference>
<dbReference type="CCDS" id="CCDS40801.1"/>
<dbReference type="PIR" id="T14265">
    <property type="entry name" value="T14265"/>
</dbReference>
<dbReference type="RefSeq" id="NP_061218.2">
    <property type="nucleotide sequence ID" value="NM_018748.3"/>
</dbReference>
<dbReference type="SMR" id="Q91VW5"/>
<dbReference type="BioGRID" id="207604">
    <property type="interactions" value="9"/>
</dbReference>
<dbReference type="FunCoup" id="Q91VW5">
    <property type="interactions" value="2626"/>
</dbReference>
<dbReference type="IntAct" id="Q91VW5">
    <property type="interactions" value="3"/>
</dbReference>
<dbReference type="STRING" id="10090.ENSMUSP00000081880"/>
<dbReference type="iPTMnet" id="Q91VW5"/>
<dbReference type="PhosphoSitePlus" id="Q91VW5"/>
<dbReference type="jPOST" id="Q91VW5"/>
<dbReference type="PaxDb" id="10090-ENSMUSP00000081880"/>
<dbReference type="PeptideAtlas" id="Q91VW5"/>
<dbReference type="ProteomicsDB" id="271028"/>
<dbReference type="Pumba" id="Q91VW5"/>
<dbReference type="Antibodypedia" id="28305">
    <property type="antibodies" value="99 antibodies from 23 providers"/>
</dbReference>
<dbReference type="DNASU" id="54214"/>
<dbReference type="Ensembl" id="ENSMUST00000084820.6">
    <property type="protein sequence ID" value="ENSMUSP00000081880.5"/>
    <property type="gene ID" value="ENSMUSG00000038708.11"/>
</dbReference>
<dbReference type="GeneID" id="54214"/>
<dbReference type="KEGG" id="mmu:54214"/>
<dbReference type="UCSC" id="uc009rzs.1">
    <property type="organism name" value="mouse"/>
</dbReference>
<dbReference type="AGR" id="MGI:1859646"/>
<dbReference type="CTD" id="2803"/>
<dbReference type="MGI" id="MGI:1859646">
    <property type="gene designation" value="Golga4"/>
</dbReference>
<dbReference type="VEuPathDB" id="HostDB:ENSMUSG00000038708"/>
<dbReference type="eggNOG" id="ENOG502QTM0">
    <property type="taxonomic scope" value="Eukaryota"/>
</dbReference>
<dbReference type="GeneTree" id="ENSGT00730000111139"/>
<dbReference type="HOGENOM" id="CLU_001994_0_0_1"/>
<dbReference type="InParanoid" id="Q91VW5"/>
<dbReference type="OMA" id="DEFRNQG"/>
<dbReference type="OrthoDB" id="28818at2759"/>
<dbReference type="PhylomeDB" id="Q91VW5"/>
<dbReference type="TreeFam" id="TF325082"/>
<dbReference type="Reactome" id="R-MMU-6811440">
    <property type="pathway name" value="Retrograde transport at the Trans-Golgi-Network"/>
</dbReference>
<dbReference type="BioGRID-ORCS" id="54214">
    <property type="hits" value="2 hits in 77 CRISPR screens"/>
</dbReference>
<dbReference type="ChiTaRS" id="Golga4">
    <property type="organism name" value="mouse"/>
</dbReference>
<dbReference type="PRO" id="PR:Q91VW5"/>
<dbReference type="Proteomes" id="UP000000589">
    <property type="component" value="Chromosome 9"/>
</dbReference>
<dbReference type="RNAct" id="Q91VW5">
    <property type="molecule type" value="protein"/>
</dbReference>
<dbReference type="Bgee" id="ENSMUSG00000038708">
    <property type="expression patterns" value="Expressed in hindlimb stylopod muscle and 278 other cell types or tissues"/>
</dbReference>
<dbReference type="ExpressionAtlas" id="Q91VW5">
    <property type="expression patterns" value="baseline and differential"/>
</dbReference>
<dbReference type="GO" id="GO:0005737">
    <property type="term" value="C:cytoplasm"/>
    <property type="evidence" value="ECO:0000250"/>
    <property type="project" value="UniProtKB"/>
</dbReference>
<dbReference type="GO" id="GO:0005794">
    <property type="term" value="C:Golgi apparatus"/>
    <property type="evidence" value="ECO:0000314"/>
    <property type="project" value="MGI"/>
</dbReference>
<dbReference type="GO" id="GO:0000139">
    <property type="term" value="C:Golgi membrane"/>
    <property type="evidence" value="ECO:0007669"/>
    <property type="project" value="UniProtKB-SubCell"/>
</dbReference>
<dbReference type="GO" id="GO:0005654">
    <property type="term" value="C:nucleoplasm"/>
    <property type="evidence" value="ECO:0007669"/>
    <property type="project" value="Ensembl"/>
</dbReference>
<dbReference type="GO" id="GO:0051020">
    <property type="term" value="F:GTPase binding"/>
    <property type="evidence" value="ECO:0007669"/>
    <property type="project" value="Ensembl"/>
</dbReference>
<dbReference type="GO" id="GO:0043001">
    <property type="term" value="P:Golgi to plasma membrane protein transport"/>
    <property type="evidence" value="ECO:0000250"/>
    <property type="project" value="UniProtKB"/>
</dbReference>
<dbReference type="GO" id="GO:0045773">
    <property type="term" value="P:positive regulation of axon extension"/>
    <property type="evidence" value="ECO:0007669"/>
    <property type="project" value="Ensembl"/>
</dbReference>
<dbReference type="Gene3D" id="1.10.220.60">
    <property type="entry name" value="GRIP domain"/>
    <property type="match status" value="1"/>
</dbReference>
<dbReference type="InterPro" id="IPR000237">
    <property type="entry name" value="GRIP_dom"/>
</dbReference>
<dbReference type="PANTHER" id="PTHR19327">
    <property type="entry name" value="GOLGIN"/>
    <property type="match status" value="1"/>
</dbReference>
<dbReference type="PANTHER" id="PTHR19327:SF0">
    <property type="entry name" value="GOLGIN SUBFAMILY A MEMBER 4"/>
    <property type="match status" value="1"/>
</dbReference>
<dbReference type="Pfam" id="PF01465">
    <property type="entry name" value="GRIP"/>
    <property type="match status" value="1"/>
</dbReference>
<dbReference type="SMART" id="SM00755">
    <property type="entry name" value="Grip"/>
    <property type="match status" value="1"/>
</dbReference>
<dbReference type="SUPFAM" id="SSF101283">
    <property type="entry name" value="GRIP domain"/>
    <property type="match status" value="1"/>
</dbReference>
<dbReference type="PROSITE" id="PS50913">
    <property type="entry name" value="GRIP"/>
    <property type="match status" value="1"/>
</dbReference>
<keyword id="KW-0175">Coiled coil</keyword>
<keyword id="KW-0963">Cytoplasm</keyword>
<keyword id="KW-0903">Direct protein sequencing</keyword>
<keyword id="KW-0333">Golgi apparatus</keyword>
<keyword id="KW-0472">Membrane</keyword>
<keyword id="KW-0597">Phosphoprotein</keyword>
<keyword id="KW-1185">Reference proteome</keyword>